<reference key="1">
    <citation type="journal article" date="2010" name="Proc. Natl. Acad. Sci. U.S.A.">
        <title>Insights into evolution of multicellular fungi from the assembled chromosomes of the mushroom Coprinopsis cinerea (Coprinus cinereus).</title>
        <authorList>
            <person name="Stajich J.E."/>
            <person name="Wilke S.K."/>
            <person name="Ahren D."/>
            <person name="Au C.H."/>
            <person name="Birren B.W."/>
            <person name="Borodovsky M."/>
            <person name="Burns C."/>
            <person name="Canbaeck B."/>
            <person name="Casselton L.A."/>
            <person name="Cheng C.K."/>
            <person name="Deng J."/>
            <person name="Dietrich F.S."/>
            <person name="Fargo D.C."/>
            <person name="Farman M.L."/>
            <person name="Gathman A.C."/>
            <person name="Goldberg J."/>
            <person name="Guigo R."/>
            <person name="Hoegger P.J."/>
            <person name="Hooker J.B."/>
            <person name="Huggins A."/>
            <person name="James T.Y."/>
            <person name="Kamada T."/>
            <person name="Kilaru S."/>
            <person name="Kodira C."/>
            <person name="Kuees U."/>
            <person name="Kupfer D."/>
            <person name="Kwan H.S."/>
            <person name="Lomsadze A."/>
            <person name="Li W."/>
            <person name="Lilly W.W."/>
            <person name="Ma L.-J."/>
            <person name="Mackey A.J."/>
            <person name="Manning G."/>
            <person name="Martin F."/>
            <person name="Muraguchi H."/>
            <person name="Natvig D.O."/>
            <person name="Palmerini H."/>
            <person name="Ramesh M.A."/>
            <person name="Rehmeyer C.J."/>
            <person name="Roe B.A."/>
            <person name="Shenoy N."/>
            <person name="Stanke M."/>
            <person name="Ter-Hovhannisyan V."/>
            <person name="Tunlid A."/>
            <person name="Velagapudi R."/>
            <person name="Vision T.J."/>
            <person name="Zeng Q."/>
            <person name="Zolan M.E."/>
            <person name="Pukkila P.J."/>
        </authorList>
    </citation>
    <scope>NUCLEOTIDE SEQUENCE [LARGE SCALE GENOMIC DNA]</scope>
    <source>
        <strain>Okayama-7 / 130 / ATCC MYA-4618 / FGSC 9003</strain>
    </source>
</reference>
<name>ARGJ_COPC7</name>
<evidence type="ECO:0000255" key="1">
    <source>
        <dbReference type="HAMAP-Rule" id="MF_03124"/>
    </source>
</evidence>
<organism>
    <name type="scientific">Coprinopsis cinerea (strain Okayama-7 / 130 / ATCC MYA-4618 / FGSC 9003)</name>
    <name type="common">Inky cap fungus</name>
    <name type="synonym">Hormographiella aspergillata</name>
    <dbReference type="NCBI Taxonomy" id="240176"/>
    <lineage>
        <taxon>Eukaryota</taxon>
        <taxon>Fungi</taxon>
        <taxon>Dikarya</taxon>
        <taxon>Basidiomycota</taxon>
        <taxon>Agaricomycotina</taxon>
        <taxon>Agaricomycetes</taxon>
        <taxon>Agaricomycetidae</taxon>
        <taxon>Agaricales</taxon>
        <taxon>Agaricineae</taxon>
        <taxon>Psathyrellaceae</taxon>
        <taxon>Coprinopsis</taxon>
    </lineage>
</organism>
<sequence>MSAPFIFKRFSSTIPIHSKPTPSKAHLHFPLPSSSFPKGYVLTGIHAGVKKVAGVPDLAVILSTSSQPTSAAACFTRNAFKAAPVIVSNEILKKNGGYARGVVVNSGCANAVTGKQGMEDAWAMVRETDALLPSKKFEHETLVMSTGVIGQNLPISKIVEGIRSQAESSSTRSLASDFSAWERAAKAFMTTDTFPKLRSRTFTIDGVEYKLAGMDKGAGMIHPDMGPAGTEFKKQLHATLLGCILTDAAVSPRSLQSALTYAVDRSFNSISVDGDMSTNDSIYVLANGAASSSIIDEDATPQAYEAFKQELTTFAADLAKLVVRDGEGATKFVTVTVKGAPSYKDAHSIASRISTSALVKTALYGEDANWGRILAATGSVPLSPTNANTPPPVIDTTKVCVTIVPADGTAPLPVLVNGEPENVDEDRAKEIMTQEDFELLVDLGGMGDGEAQYWTCDFSYEYVRINGDYRS</sequence>
<gene>
    <name type="ORF">CC1G_08401</name>
</gene>
<protein>
    <recommendedName>
        <fullName evidence="1">Arginine biosynthesis bifunctional protein ArgJ, mitochondrial</fullName>
    </recommendedName>
    <domain>
        <recommendedName>
            <fullName evidence="1">Glutamate N-acetyltransferase</fullName>
            <shortName evidence="1">GAT</shortName>
            <ecNumber evidence="1">2.3.1.35</ecNumber>
        </recommendedName>
        <alternativeName>
            <fullName evidence="1">Ornithine acetyltransferase</fullName>
            <shortName evidence="1">OATase</shortName>
        </alternativeName>
        <alternativeName>
            <fullName evidence="1">Ornithine transacetylase</fullName>
        </alternativeName>
    </domain>
    <domain>
        <recommendedName>
            <fullName evidence="1">Amino-acid acetyltransferase</fullName>
            <ecNumber evidence="1">2.3.1.1</ecNumber>
        </recommendedName>
        <alternativeName>
            <fullName evidence="1">N-acetylglutamate synthase</fullName>
            <shortName evidence="1">AGS</shortName>
        </alternativeName>
    </domain>
    <component>
        <recommendedName>
            <fullName evidence="1">Arginine biosynthesis bifunctional protein ArgJ alpha chain</fullName>
        </recommendedName>
    </component>
    <component>
        <recommendedName>
            <fullName evidence="1">Arginine biosynthesis bifunctional protein ArgJ beta chain</fullName>
        </recommendedName>
    </component>
</protein>
<comment type="function">
    <text evidence="1">Catalyzes two activities which are involved in the cyclic version of arginine biosynthesis: the synthesis of acetylglutamate from glutamate and acetyl-CoA, and of ornithine by transacetylation between acetylornithine and glutamate.</text>
</comment>
<comment type="catalytic activity">
    <reaction evidence="1">
        <text>N(2)-acetyl-L-ornithine + L-glutamate = N-acetyl-L-glutamate + L-ornithine</text>
        <dbReference type="Rhea" id="RHEA:15349"/>
        <dbReference type="ChEBI" id="CHEBI:29985"/>
        <dbReference type="ChEBI" id="CHEBI:44337"/>
        <dbReference type="ChEBI" id="CHEBI:46911"/>
        <dbReference type="ChEBI" id="CHEBI:57805"/>
        <dbReference type="EC" id="2.3.1.35"/>
    </reaction>
</comment>
<comment type="catalytic activity">
    <reaction evidence="1">
        <text>L-glutamate + acetyl-CoA = N-acetyl-L-glutamate + CoA + H(+)</text>
        <dbReference type="Rhea" id="RHEA:24292"/>
        <dbReference type="ChEBI" id="CHEBI:15378"/>
        <dbReference type="ChEBI" id="CHEBI:29985"/>
        <dbReference type="ChEBI" id="CHEBI:44337"/>
        <dbReference type="ChEBI" id="CHEBI:57287"/>
        <dbReference type="ChEBI" id="CHEBI:57288"/>
        <dbReference type="EC" id="2.3.1.1"/>
    </reaction>
</comment>
<comment type="pathway">
    <text evidence="1">Amino-acid biosynthesis; L-arginine biosynthesis; L-ornithine and N-acetyl-L-glutamate from L-glutamate and N(2)-acetyl-L-ornithine (cyclic): step 1/1.</text>
</comment>
<comment type="pathway">
    <text evidence="1">Amino-acid biosynthesis; L-arginine biosynthesis; N(2)-acetyl-L-ornithine from L-glutamate: step 1/4.</text>
</comment>
<comment type="subunit">
    <text evidence="1">Heterodimer of an alpha and a beta chain.</text>
</comment>
<comment type="subcellular location">
    <subcellularLocation>
        <location evidence="1">Mitochondrion matrix</location>
    </subcellularLocation>
</comment>
<comment type="PTM">
    <text evidence="1">The alpha and beta chains are autoproteolytically processed from a single precursor protein within the mitochondrion.</text>
</comment>
<comment type="miscellaneous">
    <text evidence="1">This protein may be expected to contain an N-terminal transit peptide but none has been predicted.</text>
</comment>
<comment type="similarity">
    <text evidence="1">Belongs to the ArgJ family.</text>
</comment>
<proteinExistence type="inferred from homology"/>
<dbReference type="EC" id="2.3.1.35" evidence="1"/>
<dbReference type="EC" id="2.3.1.1" evidence="1"/>
<dbReference type="EMBL" id="AACS02000007">
    <property type="protein sequence ID" value="EAU89919.1"/>
    <property type="molecule type" value="Genomic_DNA"/>
</dbReference>
<dbReference type="RefSeq" id="XP_001831884.1">
    <property type="nucleotide sequence ID" value="XM_001831832.1"/>
</dbReference>
<dbReference type="SMR" id="A8NAN2"/>
<dbReference type="FunCoup" id="A8NAN2">
    <property type="interactions" value="165"/>
</dbReference>
<dbReference type="STRING" id="240176.A8NAN2"/>
<dbReference type="MEROPS" id="T05.001"/>
<dbReference type="GeneID" id="6008361"/>
<dbReference type="KEGG" id="cci:CC1G_08401"/>
<dbReference type="VEuPathDB" id="FungiDB:CC1G_08401"/>
<dbReference type="eggNOG" id="KOG2786">
    <property type="taxonomic scope" value="Eukaryota"/>
</dbReference>
<dbReference type="HOGENOM" id="CLU_027172_1_0_1"/>
<dbReference type="InParanoid" id="A8NAN2"/>
<dbReference type="OMA" id="WGRIVMA"/>
<dbReference type="OrthoDB" id="2017946at2759"/>
<dbReference type="UniPathway" id="UPA00068">
    <property type="reaction ID" value="UER00106"/>
</dbReference>
<dbReference type="UniPathway" id="UPA00068">
    <property type="reaction ID" value="UER00111"/>
</dbReference>
<dbReference type="Proteomes" id="UP000001861">
    <property type="component" value="Unassembled WGS sequence"/>
</dbReference>
<dbReference type="GO" id="GO:0005759">
    <property type="term" value="C:mitochondrial matrix"/>
    <property type="evidence" value="ECO:0007669"/>
    <property type="project" value="UniProtKB-SubCell"/>
</dbReference>
<dbReference type="GO" id="GO:0004358">
    <property type="term" value="F:glutamate N-acetyltransferase activity"/>
    <property type="evidence" value="ECO:0007669"/>
    <property type="project" value="UniProtKB-UniRule"/>
</dbReference>
<dbReference type="GO" id="GO:0004042">
    <property type="term" value="F:L-glutamate N-acetyltransferase activity"/>
    <property type="evidence" value="ECO:0007669"/>
    <property type="project" value="UniProtKB-UniRule"/>
</dbReference>
<dbReference type="GO" id="GO:0006526">
    <property type="term" value="P:L-arginine biosynthetic process"/>
    <property type="evidence" value="ECO:0007669"/>
    <property type="project" value="UniProtKB-UniRule"/>
</dbReference>
<dbReference type="GO" id="GO:0006592">
    <property type="term" value="P:ornithine biosynthetic process"/>
    <property type="evidence" value="ECO:0007669"/>
    <property type="project" value="TreeGrafter"/>
</dbReference>
<dbReference type="CDD" id="cd02152">
    <property type="entry name" value="OAT"/>
    <property type="match status" value="1"/>
</dbReference>
<dbReference type="FunFam" id="3.10.20.340:FF:000002">
    <property type="entry name" value="Arginine biosynthesis bifunctional protein ArgJ, mitochondrial"/>
    <property type="match status" value="1"/>
</dbReference>
<dbReference type="FunFam" id="3.30.2330.10:FF:000001">
    <property type="entry name" value="Arginine biosynthesis bifunctional protein ArgJ, mitochondrial"/>
    <property type="match status" value="1"/>
</dbReference>
<dbReference type="FunFam" id="3.60.70.12:FF:000002">
    <property type="entry name" value="Arginine biosynthesis bifunctional protein ArgJ, mitochondrial"/>
    <property type="match status" value="1"/>
</dbReference>
<dbReference type="Gene3D" id="3.30.2330.10">
    <property type="entry name" value="arginine biosynthesis bifunctional protein suprefamily"/>
    <property type="match status" value="1"/>
</dbReference>
<dbReference type="Gene3D" id="3.10.20.340">
    <property type="entry name" value="ArgJ beta chain, C-terminal domain"/>
    <property type="match status" value="1"/>
</dbReference>
<dbReference type="Gene3D" id="3.60.70.12">
    <property type="entry name" value="L-amino peptidase D-ALA esterase/amidase"/>
    <property type="match status" value="1"/>
</dbReference>
<dbReference type="HAMAP" id="MF_01106">
    <property type="entry name" value="ArgJ"/>
    <property type="match status" value="1"/>
</dbReference>
<dbReference type="InterPro" id="IPR002813">
    <property type="entry name" value="Arg_biosynth_ArgJ"/>
</dbReference>
<dbReference type="InterPro" id="IPR016117">
    <property type="entry name" value="ArgJ-like_dom_sf"/>
</dbReference>
<dbReference type="InterPro" id="IPR042195">
    <property type="entry name" value="ArgJ_beta_C"/>
</dbReference>
<dbReference type="NCBIfam" id="TIGR00120">
    <property type="entry name" value="ArgJ"/>
    <property type="match status" value="1"/>
</dbReference>
<dbReference type="NCBIfam" id="NF003802">
    <property type="entry name" value="PRK05388.1"/>
    <property type="match status" value="1"/>
</dbReference>
<dbReference type="PANTHER" id="PTHR23100">
    <property type="entry name" value="ARGININE BIOSYNTHESIS BIFUNCTIONAL PROTEIN ARGJ"/>
    <property type="match status" value="1"/>
</dbReference>
<dbReference type="PANTHER" id="PTHR23100:SF0">
    <property type="entry name" value="ARGININE BIOSYNTHESIS BIFUNCTIONAL PROTEIN ARGJ, MITOCHONDRIAL"/>
    <property type="match status" value="1"/>
</dbReference>
<dbReference type="Pfam" id="PF01960">
    <property type="entry name" value="ArgJ"/>
    <property type="match status" value="1"/>
</dbReference>
<dbReference type="SUPFAM" id="SSF56266">
    <property type="entry name" value="DmpA/ArgJ-like"/>
    <property type="match status" value="1"/>
</dbReference>
<keyword id="KW-0012">Acyltransferase</keyword>
<keyword id="KW-0028">Amino-acid biosynthesis</keyword>
<keyword id="KW-0055">Arginine biosynthesis</keyword>
<keyword id="KW-0068">Autocatalytic cleavage</keyword>
<keyword id="KW-0496">Mitochondrion</keyword>
<keyword id="KW-0511">Multifunctional enzyme</keyword>
<keyword id="KW-1185">Reference proteome</keyword>
<keyword id="KW-0808">Transferase</keyword>
<accession>A8NAN2</accession>
<feature type="chain" id="PRO_0000398046" description="Arginine biosynthesis bifunctional protein ArgJ alpha chain" evidence="1">
    <location>
        <begin position="1"/>
        <end position="238"/>
    </location>
</feature>
<feature type="chain" id="PRO_0000398047" description="Arginine biosynthesis bifunctional protein ArgJ beta chain" evidence="1">
    <location>
        <begin position="239"/>
        <end position="471"/>
    </location>
</feature>
<feature type="active site" description="Nucleophile" evidence="1">
    <location>
        <position position="239"/>
    </location>
</feature>
<feature type="binding site" evidence="1">
    <location>
        <position position="190"/>
    </location>
    <ligand>
        <name>substrate</name>
    </ligand>
</feature>
<feature type="binding site" evidence="1">
    <location>
        <position position="216"/>
    </location>
    <ligand>
        <name>substrate</name>
    </ligand>
</feature>
<feature type="binding site" evidence="1">
    <location>
        <position position="239"/>
    </location>
    <ligand>
        <name>substrate</name>
    </ligand>
</feature>
<feature type="binding site" evidence="1">
    <location>
        <position position="327"/>
    </location>
    <ligand>
        <name>substrate</name>
    </ligand>
</feature>
<feature type="binding site" evidence="1">
    <location>
        <position position="466"/>
    </location>
    <ligand>
        <name>substrate</name>
    </ligand>
</feature>
<feature type="binding site" evidence="1">
    <location>
        <position position="471"/>
    </location>
    <ligand>
        <name>substrate</name>
    </ligand>
</feature>
<feature type="site" description="Involved in the stabilization of negative charge on the oxyanion by the formation of the oxyanion hole" evidence="1">
    <location>
        <position position="146"/>
    </location>
</feature>
<feature type="site" description="Involved in the stabilization of negative charge on the oxyanion by the formation of the oxyanion hole" evidence="1">
    <location>
        <position position="147"/>
    </location>
</feature>
<feature type="site" description="Cleavage; by autolysis" evidence="1">
    <location>
        <begin position="238"/>
        <end position="239"/>
    </location>
</feature>